<accession>C6E4S9</accession>
<organism>
    <name type="scientific">Geobacter sp. (strain M21)</name>
    <dbReference type="NCBI Taxonomy" id="443144"/>
    <lineage>
        <taxon>Bacteria</taxon>
        <taxon>Pseudomonadati</taxon>
        <taxon>Thermodesulfobacteriota</taxon>
        <taxon>Desulfuromonadia</taxon>
        <taxon>Geobacterales</taxon>
        <taxon>Geobacteraceae</taxon>
        <taxon>Geobacter</taxon>
    </lineage>
</organism>
<name>TRUA_GEOSM</name>
<comment type="function">
    <text evidence="1">Formation of pseudouridine at positions 38, 39 and 40 in the anticodon stem and loop of transfer RNAs.</text>
</comment>
<comment type="catalytic activity">
    <reaction evidence="1">
        <text>uridine(38/39/40) in tRNA = pseudouridine(38/39/40) in tRNA</text>
        <dbReference type="Rhea" id="RHEA:22376"/>
        <dbReference type="Rhea" id="RHEA-COMP:10085"/>
        <dbReference type="Rhea" id="RHEA-COMP:10087"/>
        <dbReference type="ChEBI" id="CHEBI:65314"/>
        <dbReference type="ChEBI" id="CHEBI:65315"/>
        <dbReference type="EC" id="5.4.99.12"/>
    </reaction>
</comment>
<comment type="subunit">
    <text evidence="1">Homodimer.</text>
</comment>
<comment type="similarity">
    <text evidence="1">Belongs to the tRNA pseudouridine synthase TruA family.</text>
</comment>
<dbReference type="EC" id="5.4.99.12" evidence="1"/>
<dbReference type="EMBL" id="CP001661">
    <property type="protein sequence ID" value="ACT19375.1"/>
    <property type="molecule type" value="Genomic_DNA"/>
</dbReference>
<dbReference type="SMR" id="C6E4S9"/>
<dbReference type="STRING" id="443144.GM21_3350"/>
<dbReference type="KEGG" id="gem:GM21_3350"/>
<dbReference type="eggNOG" id="COG0101">
    <property type="taxonomic scope" value="Bacteria"/>
</dbReference>
<dbReference type="HOGENOM" id="CLU_014673_0_1_7"/>
<dbReference type="OrthoDB" id="9811823at2"/>
<dbReference type="GO" id="GO:0003723">
    <property type="term" value="F:RNA binding"/>
    <property type="evidence" value="ECO:0007669"/>
    <property type="project" value="InterPro"/>
</dbReference>
<dbReference type="GO" id="GO:0160147">
    <property type="term" value="F:tRNA pseudouridine(38-40) synthase activity"/>
    <property type="evidence" value="ECO:0007669"/>
    <property type="project" value="UniProtKB-EC"/>
</dbReference>
<dbReference type="GO" id="GO:0031119">
    <property type="term" value="P:tRNA pseudouridine synthesis"/>
    <property type="evidence" value="ECO:0007669"/>
    <property type="project" value="UniProtKB-UniRule"/>
</dbReference>
<dbReference type="CDD" id="cd02570">
    <property type="entry name" value="PseudoU_synth_EcTruA"/>
    <property type="match status" value="1"/>
</dbReference>
<dbReference type="FunFam" id="3.30.70.580:FF:000001">
    <property type="entry name" value="tRNA pseudouridine synthase A"/>
    <property type="match status" value="1"/>
</dbReference>
<dbReference type="Gene3D" id="3.30.70.660">
    <property type="entry name" value="Pseudouridine synthase I, catalytic domain, C-terminal subdomain"/>
    <property type="match status" value="1"/>
</dbReference>
<dbReference type="Gene3D" id="3.30.70.580">
    <property type="entry name" value="Pseudouridine synthase I, catalytic domain, N-terminal subdomain"/>
    <property type="match status" value="1"/>
</dbReference>
<dbReference type="HAMAP" id="MF_00171">
    <property type="entry name" value="TruA"/>
    <property type="match status" value="1"/>
</dbReference>
<dbReference type="InterPro" id="IPR020103">
    <property type="entry name" value="PsdUridine_synth_cat_dom_sf"/>
</dbReference>
<dbReference type="InterPro" id="IPR001406">
    <property type="entry name" value="PsdUridine_synth_TruA"/>
</dbReference>
<dbReference type="InterPro" id="IPR020097">
    <property type="entry name" value="PsdUridine_synth_TruA_a/b_dom"/>
</dbReference>
<dbReference type="InterPro" id="IPR020095">
    <property type="entry name" value="PsdUridine_synth_TruA_C"/>
</dbReference>
<dbReference type="InterPro" id="IPR020094">
    <property type="entry name" value="TruA/RsuA/RluB/E/F_N"/>
</dbReference>
<dbReference type="NCBIfam" id="TIGR00071">
    <property type="entry name" value="hisT_truA"/>
    <property type="match status" value="1"/>
</dbReference>
<dbReference type="PANTHER" id="PTHR11142">
    <property type="entry name" value="PSEUDOURIDYLATE SYNTHASE"/>
    <property type="match status" value="1"/>
</dbReference>
<dbReference type="PANTHER" id="PTHR11142:SF0">
    <property type="entry name" value="TRNA PSEUDOURIDINE SYNTHASE-LIKE 1"/>
    <property type="match status" value="1"/>
</dbReference>
<dbReference type="Pfam" id="PF01416">
    <property type="entry name" value="PseudoU_synth_1"/>
    <property type="match status" value="2"/>
</dbReference>
<dbReference type="PIRSF" id="PIRSF001430">
    <property type="entry name" value="tRNA_psdUrid_synth"/>
    <property type="match status" value="1"/>
</dbReference>
<dbReference type="SUPFAM" id="SSF55120">
    <property type="entry name" value="Pseudouridine synthase"/>
    <property type="match status" value="1"/>
</dbReference>
<reference key="1">
    <citation type="submission" date="2009-07" db="EMBL/GenBank/DDBJ databases">
        <title>Complete sequence of Geobacter sp. M21.</title>
        <authorList>
            <consortium name="US DOE Joint Genome Institute"/>
            <person name="Lucas S."/>
            <person name="Copeland A."/>
            <person name="Lapidus A."/>
            <person name="Glavina del Rio T."/>
            <person name="Dalin E."/>
            <person name="Tice H."/>
            <person name="Bruce D."/>
            <person name="Goodwin L."/>
            <person name="Pitluck S."/>
            <person name="Saunders E."/>
            <person name="Brettin T."/>
            <person name="Detter J.C."/>
            <person name="Han C."/>
            <person name="Larimer F."/>
            <person name="Land M."/>
            <person name="Hauser L."/>
            <person name="Kyrpides N."/>
            <person name="Ovchinnikova G."/>
            <person name="Lovley D."/>
        </authorList>
    </citation>
    <scope>NUCLEOTIDE SEQUENCE [LARGE SCALE GENOMIC DNA]</scope>
    <source>
        <strain>M21</strain>
    </source>
</reference>
<feature type="chain" id="PRO_1000203692" description="tRNA pseudouridine synthase A">
    <location>
        <begin position="1"/>
        <end position="247"/>
    </location>
</feature>
<feature type="active site" description="Nucleophile" evidence="1">
    <location>
        <position position="52"/>
    </location>
</feature>
<feature type="binding site" evidence="1">
    <location>
        <position position="110"/>
    </location>
    <ligand>
        <name>substrate</name>
    </ligand>
</feature>
<evidence type="ECO:0000255" key="1">
    <source>
        <dbReference type="HAMAP-Rule" id="MF_00171"/>
    </source>
</evidence>
<proteinExistence type="inferred from homology"/>
<gene>
    <name evidence="1" type="primary">truA</name>
    <name type="ordered locus">GM21_3350</name>
</gene>
<protein>
    <recommendedName>
        <fullName evidence="1">tRNA pseudouridine synthase A</fullName>
        <ecNumber evidence="1">5.4.99.12</ecNumber>
    </recommendedName>
    <alternativeName>
        <fullName evidence="1">tRNA pseudouridine(38-40) synthase</fullName>
    </alternativeName>
    <alternativeName>
        <fullName evidence="1">tRNA pseudouridylate synthase I</fullName>
    </alternativeName>
    <alternativeName>
        <fullName evidence="1">tRNA-uridine isomerase I</fullName>
    </alternativeName>
</protein>
<keyword id="KW-0413">Isomerase</keyword>
<keyword id="KW-0819">tRNA processing</keyword>
<sequence length="247" mass="27296">MRNIKLIIEYDGTAYCGWQVQPNGRTVQEALEEALASMLGGKTALHGSGRTDAGVHARGMVACFQTDKGMPLRAFREGLNCLLPADIAVREACEVPLEFHPRFDALAKHYRYTMLLDDLRSPLSRLTAWRLKGKLDVDAMRSACAAFVGEHDFAAFRASNCAAKTTVRRIYSMDLVQEGPFLHLDVKGSGFLKNMVRIITGTLIEVGQGKKSVEDVARLLKGSDRQQNSGMTVPPQGLCLMQVYYPE</sequence>